<dbReference type="EC" id="1.3.5.2" evidence="1"/>
<dbReference type="EMBL" id="CP001071">
    <property type="protein sequence ID" value="ACD04214.1"/>
    <property type="molecule type" value="Genomic_DNA"/>
</dbReference>
<dbReference type="RefSeq" id="WP_012419429.1">
    <property type="nucleotide sequence ID" value="NC_010655.1"/>
</dbReference>
<dbReference type="SMR" id="B2UNA2"/>
<dbReference type="STRING" id="349741.Amuc_0375"/>
<dbReference type="PaxDb" id="349741-Amuc_0375"/>
<dbReference type="KEGG" id="amu:Amuc_0375"/>
<dbReference type="eggNOG" id="COG0167">
    <property type="taxonomic scope" value="Bacteria"/>
</dbReference>
<dbReference type="HOGENOM" id="CLU_013640_2_0_0"/>
<dbReference type="OrthoDB" id="9802377at2"/>
<dbReference type="BioCyc" id="AMUC349741:G1GBX-418-MONOMER"/>
<dbReference type="UniPathway" id="UPA00070">
    <property type="reaction ID" value="UER00946"/>
</dbReference>
<dbReference type="Proteomes" id="UP000001031">
    <property type="component" value="Chromosome"/>
</dbReference>
<dbReference type="GO" id="GO:0005737">
    <property type="term" value="C:cytoplasm"/>
    <property type="evidence" value="ECO:0007669"/>
    <property type="project" value="InterPro"/>
</dbReference>
<dbReference type="GO" id="GO:0005886">
    <property type="term" value="C:plasma membrane"/>
    <property type="evidence" value="ECO:0007669"/>
    <property type="project" value="UniProtKB-SubCell"/>
</dbReference>
<dbReference type="GO" id="GO:0106430">
    <property type="term" value="F:dihydroorotate dehydrogenase (quinone) activity"/>
    <property type="evidence" value="ECO:0007669"/>
    <property type="project" value="UniProtKB-EC"/>
</dbReference>
<dbReference type="GO" id="GO:0006207">
    <property type="term" value="P:'de novo' pyrimidine nucleobase biosynthetic process"/>
    <property type="evidence" value="ECO:0007669"/>
    <property type="project" value="InterPro"/>
</dbReference>
<dbReference type="GO" id="GO:0044205">
    <property type="term" value="P:'de novo' UMP biosynthetic process"/>
    <property type="evidence" value="ECO:0007669"/>
    <property type="project" value="UniProtKB-UniRule"/>
</dbReference>
<dbReference type="CDD" id="cd04738">
    <property type="entry name" value="DHOD_2_like"/>
    <property type="match status" value="1"/>
</dbReference>
<dbReference type="Gene3D" id="3.20.20.70">
    <property type="entry name" value="Aldolase class I"/>
    <property type="match status" value="1"/>
</dbReference>
<dbReference type="HAMAP" id="MF_00225">
    <property type="entry name" value="DHO_dh_type2"/>
    <property type="match status" value="1"/>
</dbReference>
<dbReference type="InterPro" id="IPR013785">
    <property type="entry name" value="Aldolase_TIM"/>
</dbReference>
<dbReference type="InterPro" id="IPR050074">
    <property type="entry name" value="DHO_dehydrogenase"/>
</dbReference>
<dbReference type="InterPro" id="IPR012135">
    <property type="entry name" value="Dihydroorotate_DH_1_2"/>
</dbReference>
<dbReference type="InterPro" id="IPR005719">
    <property type="entry name" value="Dihydroorotate_DH_2"/>
</dbReference>
<dbReference type="InterPro" id="IPR005720">
    <property type="entry name" value="Dihydroorotate_DH_cat"/>
</dbReference>
<dbReference type="InterPro" id="IPR001295">
    <property type="entry name" value="Dihydroorotate_DH_CS"/>
</dbReference>
<dbReference type="NCBIfam" id="NF003644">
    <property type="entry name" value="PRK05286.1-1"/>
    <property type="match status" value="1"/>
</dbReference>
<dbReference type="NCBIfam" id="NF003645">
    <property type="entry name" value="PRK05286.1-2"/>
    <property type="match status" value="1"/>
</dbReference>
<dbReference type="NCBIfam" id="NF003646">
    <property type="entry name" value="PRK05286.1-4"/>
    <property type="match status" value="1"/>
</dbReference>
<dbReference type="NCBIfam" id="NF003652">
    <property type="entry name" value="PRK05286.2-5"/>
    <property type="match status" value="1"/>
</dbReference>
<dbReference type="NCBIfam" id="TIGR01036">
    <property type="entry name" value="pyrD_sub2"/>
    <property type="match status" value="1"/>
</dbReference>
<dbReference type="PANTHER" id="PTHR48109:SF4">
    <property type="entry name" value="DIHYDROOROTATE DEHYDROGENASE (QUINONE), MITOCHONDRIAL"/>
    <property type="match status" value="1"/>
</dbReference>
<dbReference type="PANTHER" id="PTHR48109">
    <property type="entry name" value="DIHYDROOROTATE DEHYDROGENASE (QUINONE), MITOCHONDRIAL-RELATED"/>
    <property type="match status" value="1"/>
</dbReference>
<dbReference type="Pfam" id="PF01180">
    <property type="entry name" value="DHO_dh"/>
    <property type="match status" value="1"/>
</dbReference>
<dbReference type="PIRSF" id="PIRSF000164">
    <property type="entry name" value="DHO_oxidase"/>
    <property type="match status" value="1"/>
</dbReference>
<dbReference type="SUPFAM" id="SSF51395">
    <property type="entry name" value="FMN-linked oxidoreductases"/>
    <property type="match status" value="1"/>
</dbReference>
<dbReference type="PROSITE" id="PS00911">
    <property type="entry name" value="DHODEHASE_1"/>
    <property type="match status" value="1"/>
</dbReference>
<dbReference type="PROSITE" id="PS00912">
    <property type="entry name" value="DHODEHASE_2"/>
    <property type="match status" value="1"/>
</dbReference>
<keyword id="KW-1003">Cell membrane</keyword>
<keyword id="KW-0285">Flavoprotein</keyword>
<keyword id="KW-0288">FMN</keyword>
<keyword id="KW-0472">Membrane</keyword>
<keyword id="KW-0560">Oxidoreductase</keyword>
<keyword id="KW-0665">Pyrimidine biosynthesis</keyword>
<keyword id="KW-1185">Reference proteome</keyword>
<reference key="1">
    <citation type="journal article" date="2011" name="PLoS ONE">
        <title>The genome of Akkermansia muciniphila, a dedicated intestinal mucin degrader, and its use in exploring intestinal metagenomes.</title>
        <authorList>
            <person name="van Passel M.W."/>
            <person name="Kant R."/>
            <person name="Zoetendal E.G."/>
            <person name="Plugge C.M."/>
            <person name="Derrien M."/>
            <person name="Malfatti S.A."/>
            <person name="Chain P.S."/>
            <person name="Woyke T."/>
            <person name="Palva A."/>
            <person name="de Vos W.M."/>
            <person name="Smidt H."/>
        </authorList>
    </citation>
    <scope>NUCLEOTIDE SEQUENCE [LARGE SCALE GENOMIC DNA]</scope>
    <source>
        <strain>ATCC BAA-835 / DSM 22959 / JCM 33894 / BCRC 81048 / CCUG 64013 / CIP 107961 / Muc</strain>
    </source>
</reference>
<protein>
    <recommendedName>
        <fullName evidence="1">Dihydroorotate dehydrogenase (quinone)</fullName>
        <ecNumber evidence="1">1.3.5.2</ecNumber>
    </recommendedName>
    <alternativeName>
        <fullName evidence="1">DHOdehase</fullName>
        <shortName evidence="1">DHOD</shortName>
        <shortName evidence="1">DHODase</shortName>
    </alternativeName>
    <alternativeName>
        <fullName evidence="1">Dihydroorotate oxidase</fullName>
    </alternativeName>
</protein>
<feature type="chain" id="PRO_1000195060" description="Dihydroorotate dehydrogenase (quinone)">
    <location>
        <begin position="1"/>
        <end position="348"/>
    </location>
</feature>
<feature type="active site" description="Nucleophile" evidence="1">
    <location>
        <position position="179"/>
    </location>
</feature>
<feature type="binding site" evidence="1">
    <location>
        <begin position="65"/>
        <end position="69"/>
    </location>
    <ligand>
        <name>FMN</name>
        <dbReference type="ChEBI" id="CHEBI:58210"/>
    </ligand>
</feature>
<feature type="binding site" evidence="1">
    <location>
        <position position="69"/>
    </location>
    <ligand>
        <name>substrate</name>
    </ligand>
</feature>
<feature type="binding site" evidence="1">
    <location>
        <position position="89"/>
    </location>
    <ligand>
        <name>FMN</name>
        <dbReference type="ChEBI" id="CHEBI:58210"/>
    </ligand>
</feature>
<feature type="binding site" evidence="1">
    <location>
        <begin position="114"/>
        <end position="118"/>
    </location>
    <ligand>
        <name>substrate</name>
    </ligand>
</feature>
<feature type="binding site" evidence="1">
    <location>
        <position position="143"/>
    </location>
    <ligand>
        <name>FMN</name>
        <dbReference type="ChEBI" id="CHEBI:58210"/>
    </ligand>
</feature>
<feature type="binding site" evidence="1">
    <location>
        <position position="176"/>
    </location>
    <ligand>
        <name>FMN</name>
        <dbReference type="ChEBI" id="CHEBI:58210"/>
    </ligand>
</feature>
<feature type="binding site" evidence="1">
    <location>
        <position position="176"/>
    </location>
    <ligand>
        <name>substrate</name>
    </ligand>
</feature>
<feature type="binding site" evidence="1">
    <location>
        <position position="181"/>
    </location>
    <ligand>
        <name>substrate</name>
    </ligand>
</feature>
<feature type="binding site" evidence="1">
    <location>
        <position position="221"/>
    </location>
    <ligand>
        <name>FMN</name>
        <dbReference type="ChEBI" id="CHEBI:58210"/>
    </ligand>
</feature>
<feature type="binding site" evidence="1">
    <location>
        <position position="249"/>
    </location>
    <ligand>
        <name>FMN</name>
        <dbReference type="ChEBI" id="CHEBI:58210"/>
    </ligand>
</feature>
<feature type="binding site" evidence="1">
    <location>
        <begin position="250"/>
        <end position="251"/>
    </location>
    <ligand>
        <name>substrate</name>
    </ligand>
</feature>
<feature type="binding site" evidence="1">
    <location>
        <position position="272"/>
    </location>
    <ligand>
        <name>FMN</name>
        <dbReference type="ChEBI" id="CHEBI:58210"/>
    </ligand>
</feature>
<feature type="binding site" evidence="1">
    <location>
        <position position="301"/>
    </location>
    <ligand>
        <name>FMN</name>
        <dbReference type="ChEBI" id="CHEBI:58210"/>
    </ligand>
</feature>
<feature type="binding site" evidence="1">
    <location>
        <begin position="322"/>
        <end position="323"/>
    </location>
    <ligand>
        <name>FMN</name>
        <dbReference type="ChEBI" id="CHEBI:58210"/>
    </ligand>
</feature>
<accession>B2UNA2</accession>
<name>PYRD_AKKM8</name>
<organism>
    <name type="scientific">Akkermansia muciniphila (strain ATCC BAA-835 / DSM 22959 / JCM 33894 / BCRC 81048 / CCUG 64013 / CIP 107961 / Muc)</name>
    <dbReference type="NCBI Taxonomy" id="349741"/>
    <lineage>
        <taxon>Bacteria</taxon>
        <taxon>Pseudomonadati</taxon>
        <taxon>Verrucomicrobiota</taxon>
        <taxon>Verrucomicrobiia</taxon>
        <taxon>Verrucomicrobiales</taxon>
        <taxon>Akkermansiaceae</taxon>
        <taxon>Akkermansia</taxon>
    </lineage>
</organism>
<evidence type="ECO:0000255" key="1">
    <source>
        <dbReference type="HAMAP-Rule" id="MF_00225"/>
    </source>
</evidence>
<comment type="function">
    <text evidence="1">Catalyzes the conversion of dihydroorotate to orotate with quinone as electron acceptor.</text>
</comment>
<comment type="catalytic activity">
    <reaction evidence="1">
        <text>(S)-dihydroorotate + a quinone = orotate + a quinol</text>
        <dbReference type="Rhea" id="RHEA:30187"/>
        <dbReference type="ChEBI" id="CHEBI:24646"/>
        <dbReference type="ChEBI" id="CHEBI:30839"/>
        <dbReference type="ChEBI" id="CHEBI:30864"/>
        <dbReference type="ChEBI" id="CHEBI:132124"/>
        <dbReference type="EC" id="1.3.5.2"/>
    </reaction>
</comment>
<comment type="cofactor">
    <cofactor evidence="1">
        <name>FMN</name>
        <dbReference type="ChEBI" id="CHEBI:58210"/>
    </cofactor>
    <text evidence="1">Binds 1 FMN per subunit.</text>
</comment>
<comment type="pathway">
    <text evidence="1">Pyrimidine metabolism; UMP biosynthesis via de novo pathway; orotate from (S)-dihydroorotate (quinone route): step 1/1.</text>
</comment>
<comment type="subunit">
    <text evidence="1">Monomer.</text>
</comment>
<comment type="subcellular location">
    <subcellularLocation>
        <location evidence="1">Cell membrane</location>
        <topology evidence="1">Peripheral membrane protein</topology>
    </subcellularLocation>
</comment>
<comment type="similarity">
    <text evidence="1">Belongs to the dihydroorotate dehydrogenase family. Type 2 subfamily.</text>
</comment>
<gene>
    <name evidence="1" type="primary">pyrD</name>
    <name type="ordered locus">Amuc_0375</name>
</gene>
<proteinExistence type="inferred from homology"/>
<sequence>MSPALYSAAKSVLFQMNPETAHKVTLWGLRLAEKMRVLPLVMGEVPSDPVEILGMKFPNRVGLAAGMDKEADTVSAFGQAGFGFVEVGTLTPRPQPGNEKPRLFRLIPQKAIINRMGFNNEGIAAGVENIRSATRFHGVLGVNIGKNKITPNEDAAQDYLTCLRAAWPVADYIAINFSSPNTPGLRDLQAAEPAARLLASLKSEQSNLAAETGRHVPIFMKVAPDVTDEHIAELSRVFLDEGLDGLIATNTTLSRVGVEANPRHEEAGGLSGAPLTERSTEVIGAFASELKGRIPIIGVGGIMNGVDAVAKIKAGASLVQLYTGFVYRGPDLIRECVEAMKAECPVHR</sequence>